<organism>
    <name type="scientific">Columba livia</name>
    <name type="common">Rock dove</name>
    <dbReference type="NCBI Taxonomy" id="8932"/>
    <lineage>
        <taxon>Eukaryota</taxon>
        <taxon>Metazoa</taxon>
        <taxon>Chordata</taxon>
        <taxon>Craniata</taxon>
        <taxon>Vertebrata</taxon>
        <taxon>Euteleostomi</taxon>
        <taxon>Archelosauria</taxon>
        <taxon>Archosauria</taxon>
        <taxon>Dinosauria</taxon>
        <taxon>Saurischia</taxon>
        <taxon>Theropoda</taxon>
        <taxon>Coelurosauria</taxon>
        <taxon>Aves</taxon>
        <taxon>Neognathae</taxon>
        <taxon>Neoaves</taxon>
        <taxon>Columbimorphae</taxon>
        <taxon>Columbiformes</taxon>
        <taxon>Columbidae</taxon>
        <taxon>Columba</taxon>
    </lineage>
</organism>
<name>PRLR_COLLI</name>
<comment type="function">
    <text>This is a receptor for the anterior pituitary hormone prolactin.</text>
</comment>
<comment type="subcellular location">
    <subcellularLocation>
        <location>Membrane</location>
        <topology>Single-pass type I membrane protein</topology>
    </subcellularLocation>
</comment>
<comment type="domain">
    <text>The WSXWS motif appears to be necessary for proper protein folding and thereby efficient intracellular transport and cell-surface receptor binding.</text>
</comment>
<comment type="domain">
    <text>The box 1 motif is required for JAK interaction and/or activation.</text>
</comment>
<comment type="similarity">
    <text evidence="4">Belongs to the type I cytokine receptor family. Type 1 subfamily.</text>
</comment>
<keyword id="KW-1015">Disulfide bond</keyword>
<keyword id="KW-0325">Glycoprotein</keyword>
<keyword id="KW-0472">Membrane</keyword>
<keyword id="KW-0479">Metal-binding</keyword>
<keyword id="KW-0675">Receptor</keyword>
<keyword id="KW-0677">Repeat</keyword>
<keyword id="KW-0732">Signal</keyword>
<keyword id="KW-0812">Transmembrane</keyword>
<keyword id="KW-1133">Transmembrane helix</keyword>
<keyword id="KW-0862">Zinc</keyword>
<feature type="signal peptide" evidence="2">
    <location>
        <begin position="1"/>
        <end position="23"/>
    </location>
</feature>
<feature type="chain" id="PRO_0000010985" description="Prolactin receptor">
    <location>
        <begin position="24"/>
        <end position="830"/>
    </location>
</feature>
<feature type="topological domain" description="Extracellular" evidence="2">
    <location>
        <begin position="24"/>
        <end position="439"/>
    </location>
</feature>
<feature type="transmembrane region" description="Helical" evidence="2">
    <location>
        <begin position="440"/>
        <end position="460"/>
    </location>
</feature>
<feature type="topological domain" description="Cytoplasmic" evidence="2">
    <location>
        <begin position="461"/>
        <end position="830"/>
    </location>
</feature>
<feature type="domain" description="Fibronectin type-III 1" evidence="3">
    <location>
        <begin position="30"/>
        <end position="128"/>
    </location>
</feature>
<feature type="domain" description="Fibronectin type-III 2" evidence="3">
    <location>
        <begin position="129"/>
        <end position="228"/>
    </location>
</feature>
<feature type="domain" description="Fibronectin type-III 3" evidence="3">
    <location>
        <begin position="231"/>
        <end position="331"/>
    </location>
</feature>
<feature type="domain" description="Fibronectin type-III 4" evidence="3">
    <location>
        <begin position="333"/>
        <end position="434"/>
    </location>
</feature>
<feature type="short sequence motif" description="WSXWS motif">
    <location>
        <begin position="420"/>
        <end position="424"/>
    </location>
</feature>
<feature type="short sequence motif" description="Box 1 motif">
    <location>
        <begin position="472"/>
        <end position="480"/>
    </location>
</feature>
<feature type="binding site" evidence="1">
    <location>
        <position position="415"/>
    </location>
    <ligand>
        <name>Zn(2+)</name>
        <dbReference type="ChEBI" id="CHEBI:29105"/>
    </ligand>
</feature>
<feature type="binding site" evidence="1">
    <location>
        <position position="417"/>
    </location>
    <ligand>
        <name>Zn(2+)</name>
        <dbReference type="ChEBI" id="CHEBI:29105"/>
    </ligand>
</feature>
<feature type="glycosylation site" description="N-linked (GlcNAc...) asparagine" evidence="2">
    <location>
        <position position="59"/>
    </location>
</feature>
<feature type="glycosylation site" description="N-linked (GlcNAc...) asparagine" evidence="2">
    <location>
        <position position="91"/>
    </location>
</feature>
<feature type="glycosylation site" description="N-linked (GlcNAc...) asparagine" evidence="2">
    <location>
        <position position="100"/>
    </location>
</feature>
<feature type="glycosylation site" description="N-linked (GlcNAc...) asparagine" evidence="2">
    <location>
        <position position="112"/>
    </location>
</feature>
<feature type="glycosylation site" description="N-linked (GlcNAc...) asparagine" evidence="2">
    <location>
        <position position="132"/>
    </location>
</feature>
<feature type="glycosylation site" description="N-linked (GlcNAc...) asparagine" evidence="2">
    <location>
        <position position="263"/>
    </location>
</feature>
<feature type="glycosylation site" description="N-linked (GlcNAc...) asparagine" evidence="2">
    <location>
        <position position="304"/>
    </location>
</feature>
<feature type="glycosylation site" description="N-linked (GlcNAc...) asparagine" evidence="2">
    <location>
        <position position="316"/>
    </location>
</feature>
<feature type="glycosylation site" description="N-linked (GlcNAc...) asparagine" evidence="2">
    <location>
        <position position="336"/>
    </location>
</feature>
<feature type="disulfide bond" evidence="1">
    <location>
        <begin position="36"/>
        <end position="46"/>
    </location>
</feature>
<feature type="disulfide bond" evidence="1">
    <location>
        <begin position="75"/>
        <end position="86"/>
    </location>
</feature>
<gene>
    <name type="primary">PRLR</name>
</gene>
<dbReference type="EMBL" id="U07694">
    <property type="protein sequence ID" value="AAA20646.1"/>
    <property type="molecule type" value="mRNA"/>
</dbReference>
<dbReference type="PIR" id="I50455">
    <property type="entry name" value="I50455"/>
</dbReference>
<dbReference type="RefSeq" id="NP_001269751.1">
    <property type="nucleotide sequence ID" value="NM_001282822.1"/>
</dbReference>
<dbReference type="SMR" id="Q90374"/>
<dbReference type="GlyCosmos" id="Q90374">
    <property type="glycosylation" value="9 sites, No reported glycans"/>
</dbReference>
<dbReference type="GeneID" id="102086225"/>
<dbReference type="KEGG" id="clv:102086225"/>
<dbReference type="CTD" id="5618"/>
<dbReference type="eggNOG" id="ENOG502R22A">
    <property type="taxonomic scope" value="Eukaryota"/>
</dbReference>
<dbReference type="GO" id="GO:0009897">
    <property type="term" value="C:external side of plasma membrane"/>
    <property type="evidence" value="ECO:0007669"/>
    <property type="project" value="TreeGrafter"/>
</dbReference>
<dbReference type="GO" id="GO:0005886">
    <property type="term" value="C:plasma membrane"/>
    <property type="evidence" value="ECO:0000304"/>
    <property type="project" value="AgBase"/>
</dbReference>
<dbReference type="GO" id="GO:0043235">
    <property type="term" value="C:receptor complex"/>
    <property type="evidence" value="ECO:0007669"/>
    <property type="project" value="TreeGrafter"/>
</dbReference>
<dbReference type="GO" id="GO:0019955">
    <property type="term" value="F:cytokine binding"/>
    <property type="evidence" value="ECO:0007669"/>
    <property type="project" value="TreeGrafter"/>
</dbReference>
<dbReference type="GO" id="GO:0004896">
    <property type="term" value="F:cytokine receptor activity"/>
    <property type="evidence" value="ECO:0007669"/>
    <property type="project" value="InterPro"/>
</dbReference>
<dbReference type="GO" id="GO:0046872">
    <property type="term" value="F:metal ion binding"/>
    <property type="evidence" value="ECO:0007669"/>
    <property type="project" value="UniProtKB-KW"/>
</dbReference>
<dbReference type="CDD" id="cd00063">
    <property type="entry name" value="FN3"/>
    <property type="match status" value="4"/>
</dbReference>
<dbReference type="FunFam" id="2.60.40.10:FF:000287">
    <property type="entry name" value="Prolactin receptor"/>
    <property type="match status" value="2"/>
</dbReference>
<dbReference type="FunFam" id="2.60.40.10:FF:000358">
    <property type="entry name" value="Prolactin receptor"/>
    <property type="match status" value="2"/>
</dbReference>
<dbReference type="Gene3D" id="2.60.40.10">
    <property type="entry name" value="Immunoglobulins"/>
    <property type="match status" value="4"/>
</dbReference>
<dbReference type="InterPro" id="IPR003961">
    <property type="entry name" value="FN3_dom"/>
</dbReference>
<dbReference type="InterPro" id="IPR036116">
    <property type="entry name" value="FN3_sf"/>
</dbReference>
<dbReference type="InterPro" id="IPR015152">
    <property type="entry name" value="Growth/epo_recpt_lig-bind"/>
</dbReference>
<dbReference type="InterPro" id="IPR013783">
    <property type="entry name" value="Ig-like_fold"/>
</dbReference>
<dbReference type="InterPro" id="IPR003528">
    <property type="entry name" value="Long_hematopoietin_rcpt_CS"/>
</dbReference>
<dbReference type="InterPro" id="IPR050379">
    <property type="entry name" value="Type-I_Cytokine_Rcpt"/>
</dbReference>
<dbReference type="PANTHER" id="PTHR23036">
    <property type="entry name" value="CYTOKINE RECEPTOR"/>
    <property type="match status" value="1"/>
</dbReference>
<dbReference type="PANTHER" id="PTHR23036:SF86">
    <property type="entry name" value="PROLACTIN RECEPTOR"/>
    <property type="match status" value="1"/>
</dbReference>
<dbReference type="Pfam" id="PF09067">
    <property type="entry name" value="EpoR_lig-bind"/>
    <property type="match status" value="2"/>
</dbReference>
<dbReference type="Pfam" id="PF00041">
    <property type="entry name" value="fn3"/>
    <property type="match status" value="1"/>
</dbReference>
<dbReference type="SMART" id="SM00060">
    <property type="entry name" value="FN3"/>
    <property type="match status" value="4"/>
</dbReference>
<dbReference type="SUPFAM" id="SSF49265">
    <property type="entry name" value="Fibronectin type III"/>
    <property type="match status" value="4"/>
</dbReference>
<dbReference type="PROSITE" id="PS50853">
    <property type="entry name" value="FN3"/>
    <property type="match status" value="4"/>
</dbReference>
<dbReference type="PROSITE" id="PS01352">
    <property type="entry name" value="HEMATOPO_REC_L_F1"/>
    <property type="match status" value="1"/>
</dbReference>
<sequence length="830" mass="94507">MKQKLRSSVQIILLFALTAVGLTGQSYPGKPKIIRCRSLEKETFSCWWKPGSDGGLPTNYTLFYSKDSEEKIYECPDYGMSGPNSCYFDKNHTNPWTTYNITVMAMNEIGSNSSDPQYVDVTSIVQPDAPVNLSLETKTSASTTYLLAKWSPPPLADVTSNSHVYRYELRLKPEEKEEWETVSVGVQTQYKVNRLQAGVKYVVQVRCVLDIGEWSEWSSERHIHIPNGESPPEKPTIIKCRSPEKETFTCWWKPGSDGGHPTNYTLLYSKEGEERVYECPDYKTAGPNSCYFDKKHTSFWTIYNITVKATNEIGSNVSDPLYVDVTYIVQTDPPVNVTLELKKTVNRKPYLVLTWSPPPLADVRSGWLTLDYELRLKPEEAEEWETIFVGQQTHYKMFSLNPGKKYIVQIHCKPDHHGSWSEWSLEKYLQIPTDFRIKDMVVWIIVGVLSSLICLVMSWTMVLKGYRMIAFILPPVPGPKIKGIDTHLLETGKSEELLSALGCHGFPPTSDCEELLIEYLEVEDSEDQQLMPSHDNGHPSKNAKMIAKETDSDSGRGSCDSPSLLSEKCRESRAILSTLQTQDIRDVQENNGRRHWETQCIASEQKILLFNNESTKSPIWPAAQLPDNQPPMFAYHSTVDVHKITLCTIDVNIAPVLVENEEQHQPQYPITETVHDNMEKHREVENLYSKTDQTTVQVKQNRPNDKSPFSKPKLMDYVEVHKVRQDEVAAVLLKHKENSGKIEKYTVPGTSKEYTKVSTVVDHNILVLMPDSRIQHIPVSQEPAMEMSQNLQQGQTEKNMSYCLTVPSECKRETSASEYMDPSSFIPAFK</sequence>
<protein>
    <recommendedName>
        <fullName>Prolactin receptor</fullName>
        <shortName>PRL-R</shortName>
    </recommendedName>
</protein>
<reference key="1">
    <citation type="journal article" date="1994" name="Endocrinology">
        <title>Cloning, expression, and mutational analysis of the pigeon prolactin receptor.</title>
        <authorList>
            <person name="Chen X."/>
            <person name="Horseman N.D."/>
        </authorList>
    </citation>
    <scope>NUCLEOTIDE SEQUENCE [MRNA]</scope>
    <source>
        <tissue>Cropsac</tissue>
    </source>
</reference>
<proteinExistence type="evidence at transcript level"/>
<accession>Q90374</accession>
<evidence type="ECO:0000250" key="1"/>
<evidence type="ECO:0000255" key="2"/>
<evidence type="ECO:0000255" key="3">
    <source>
        <dbReference type="PROSITE-ProRule" id="PRU00316"/>
    </source>
</evidence>
<evidence type="ECO:0000305" key="4"/>